<keyword id="KW-1003">Cell membrane</keyword>
<keyword id="KW-0350">Heme biosynthesis</keyword>
<keyword id="KW-0472">Membrane</keyword>
<keyword id="KW-1185">Reference proteome</keyword>
<keyword id="KW-0808">Transferase</keyword>
<keyword id="KW-0812">Transmembrane</keyword>
<keyword id="KW-1133">Transmembrane helix</keyword>
<sequence length="289" mass="31350">MNAKIRAYVALMKLRVVELLLITTVPVMMLADRGMPSLWLIAVTLVAGTLAAGSANTINCYVDRDIDQVMGRTKRRPLVRATVTPTEALTFGIVIGIVSTLMFGLLVNWPSALLADGAIAFYVFVYTLGLKRRTPSNIVIGGAAGCFPVLIGWSAVTGTVGWSAVLLFAVVFFWTPPHFWALAMKFRDDYAAAGIPMLPVVAPVEVVTRRIVGYSYAMVAASLALVPVAHTGPVYLVSAVVVGAWFLAEAHRIDRRTRRGDDPRPMRLFHMSITYLTLLFVAIAVTAVV</sequence>
<accession>Q0RH20</accession>
<protein>
    <recommendedName>
        <fullName evidence="1">Protoheme IX farnesyltransferase</fullName>
        <ecNumber evidence="1">2.5.1.141</ecNumber>
    </recommendedName>
    <alternativeName>
        <fullName evidence="1">Heme B farnesyltransferase</fullName>
    </alternativeName>
    <alternativeName>
        <fullName evidence="1">Heme O synthase</fullName>
    </alternativeName>
</protein>
<feature type="chain" id="PRO_0000327054" description="Protoheme IX farnesyltransferase">
    <location>
        <begin position="1"/>
        <end position="289"/>
    </location>
</feature>
<feature type="transmembrane region" description="Helical" evidence="1">
    <location>
        <begin position="9"/>
        <end position="29"/>
    </location>
</feature>
<feature type="transmembrane region" description="Helical" evidence="1">
    <location>
        <begin position="35"/>
        <end position="55"/>
    </location>
</feature>
<feature type="transmembrane region" description="Helical" evidence="1">
    <location>
        <begin position="89"/>
        <end position="109"/>
    </location>
</feature>
<feature type="transmembrane region" description="Helical" evidence="1">
    <location>
        <begin position="110"/>
        <end position="130"/>
    </location>
</feature>
<feature type="transmembrane region" description="Helical" evidence="1">
    <location>
        <begin position="138"/>
        <end position="158"/>
    </location>
</feature>
<feature type="transmembrane region" description="Helical" evidence="1">
    <location>
        <begin position="164"/>
        <end position="184"/>
    </location>
</feature>
<feature type="transmembrane region" description="Helical" evidence="1">
    <location>
        <begin position="188"/>
        <end position="208"/>
    </location>
</feature>
<feature type="transmembrane region" description="Helical" evidence="1">
    <location>
        <begin position="228"/>
        <end position="248"/>
    </location>
</feature>
<feature type="transmembrane region" description="Helical" evidence="1">
    <location>
        <begin position="269"/>
        <end position="289"/>
    </location>
</feature>
<organism>
    <name type="scientific">Frankia alni (strain DSM 45986 / CECT 9034 / ACN14a)</name>
    <dbReference type="NCBI Taxonomy" id="326424"/>
    <lineage>
        <taxon>Bacteria</taxon>
        <taxon>Bacillati</taxon>
        <taxon>Actinomycetota</taxon>
        <taxon>Actinomycetes</taxon>
        <taxon>Frankiales</taxon>
        <taxon>Frankiaceae</taxon>
        <taxon>Frankia</taxon>
    </lineage>
</organism>
<evidence type="ECO:0000255" key="1">
    <source>
        <dbReference type="HAMAP-Rule" id="MF_00154"/>
    </source>
</evidence>
<evidence type="ECO:0000305" key="2"/>
<name>COXX_FRAAA</name>
<dbReference type="EC" id="2.5.1.141" evidence="1"/>
<dbReference type="EMBL" id="CT573213">
    <property type="protein sequence ID" value="CAJ63214.2"/>
    <property type="status" value="ALT_INIT"/>
    <property type="molecule type" value="Genomic_DNA"/>
</dbReference>
<dbReference type="RefSeq" id="WP_041940779.1">
    <property type="nucleotide sequence ID" value="NC_008278.1"/>
</dbReference>
<dbReference type="SMR" id="Q0RH20"/>
<dbReference type="STRING" id="326424.FRAAL4572"/>
<dbReference type="KEGG" id="fal:FRAAL4572"/>
<dbReference type="eggNOG" id="COG0109">
    <property type="taxonomic scope" value="Bacteria"/>
</dbReference>
<dbReference type="HOGENOM" id="CLU_029631_0_1_11"/>
<dbReference type="OrthoDB" id="9814417at2"/>
<dbReference type="UniPathway" id="UPA00834">
    <property type="reaction ID" value="UER00712"/>
</dbReference>
<dbReference type="Proteomes" id="UP000000657">
    <property type="component" value="Chromosome"/>
</dbReference>
<dbReference type="GO" id="GO:0005886">
    <property type="term" value="C:plasma membrane"/>
    <property type="evidence" value="ECO:0007669"/>
    <property type="project" value="UniProtKB-SubCell"/>
</dbReference>
<dbReference type="GO" id="GO:0008495">
    <property type="term" value="F:protoheme IX farnesyltransferase activity"/>
    <property type="evidence" value="ECO:0007669"/>
    <property type="project" value="UniProtKB-UniRule"/>
</dbReference>
<dbReference type="GO" id="GO:0048034">
    <property type="term" value="P:heme O biosynthetic process"/>
    <property type="evidence" value="ECO:0007669"/>
    <property type="project" value="UniProtKB-UniRule"/>
</dbReference>
<dbReference type="CDD" id="cd13957">
    <property type="entry name" value="PT_UbiA_Cox10"/>
    <property type="match status" value="1"/>
</dbReference>
<dbReference type="FunFam" id="1.10.357.140:FF:000001">
    <property type="entry name" value="Protoheme IX farnesyltransferase"/>
    <property type="match status" value="1"/>
</dbReference>
<dbReference type="Gene3D" id="1.10.357.140">
    <property type="entry name" value="UbiA prenyltransferase"/>
    <property type="match status" value="1"/>
</dbReference>
<dbReference type="HAMAP" id="MF_00154">
    <property type="entry name" value="CyoE_CtaB"/>
    <property type="match status" value="1"/>
</dbReference>
<dbReference type="InterPro" id="IPR006369">
    <property type="entry name" value="Protohaem_IX_farnesylTrfase"/>
</dbReference>
<dbReference type="InterPro" id="IPR000537">
    <property type="entry name" value="UbiA_prenyltransferase"/>
</dbReference>
<dbReference type="InterPro" id="IPR044878">
    <property type="entry name" value="UbiA_sf"/>
</dbReference>
<dbReference type="NCBIfam" id="TIGR01473">
    <property type="entry name" value="cyoE_ctaB"/>
    <property type="match status" value="1"/>
</dbReference>
<dbReference type="NCBIfam" id="NF003349">
    <property type="entry name" value="PRK04375.1-2"/>
    <property type="match status" value="1"/>
</dbReference>
<dbReference type="PANTHER" id="PTHR43448:SF7">
    <property type="entry name" value="4-HYDROXYBENZOATE SOLANESYLTRANSFERASE"/>
    <property type="match status" value="1"/>
</dbReference>
<dbReference type="PANTHER" id="PTHR43448">
    <property type="entry name" value="PROTOHEME IX FARNESYLTRANSFERASE, MITOCHONDRIAL"/>
    <property type="match status" value="1"/>
</dbReference>
<dbReference type="Pfam" id="PF01040">
    <property type="entry name" value="UbiA"/>
    <property type="match status" value="1"/>
</dbReference>
<comment type="function">
    <text evidence="1">Converts heme B (protoheme IX) to heme O by substitution of the vinyl group on carbon 2 of heme B porphyrin ring with a hydroxyethyl farnesyl side group.</text>
</comment>
<comment type="catalytic activity">
    <reaction evidence="1">
        <text>heme b + (2E,6E)-farnesyl diphosphate + H2O = Fe(II)-heme o + diphosphate</text>
        <dbReference type="Rhea" id="RHEA:28070"/>
        <dbReference type="ChEBI" id="CHEBI:15377"/>
        <dbReference type="ChEBI" id="CHEBI:33019"/>
        <dbReference type="ChEBI" id="CHEBI:60344"/>
        <dbReference type="ChEBI" id="CHEBI:60530"/>
        <dbReference type="ChEBI" id="CHEBI:175763"/>
        <dbReference type="EC" id="2.5.1.141"/>
    </reaction>
</comment>
<comment type="pathway">
    <text evidence="1">Porphyrin-containing compound metabolism; heme O biosynthesis; heme O from protoheme: step 1/1.</text>
</comment>
<comment type="subcellular location">
    <subcellularLocation>
        <location evidence="1">Cell membrane</location>
        <topology evidence="1">Multi-pass membrane protein</topology>
    </subcellularLocation>
</comment>
<comment type="miscellaneous">
    <text evidence="1">Carbon 2 of the heme B porphyrin ring is defined according to the Fischer nomenclature.</text>
</comment>
<comment type="similarity">
    <text evidence="1">Belongs to the UbiA prenyltransferase family. Protoheme IX farnesyltransferase subfamily.</text>
</comment>
<comment type="sequence caution" evidence="2">
    <conflict type="erroneous initiation">
        <sequence resource="EMBL-CDS" id="CAJ63214"/>
    </conflict>
</comment>
<reference key="1">
    <citation type="journal article" date="2007" name="Genome Res.">
        <title>Genome characteristics of facultatively symbiotic Frankia sp. strains reflect host range and host plant biogeography.</title>
        <authorList>
            <person name="Normand P."/>
            <person name="Lapierre P."/>
            <person name="Tisa L.S."/>
            <person name="Gogarten J.P."/>
            <person name="Alloisio N."/>
            <person name="Bagnarol E."/>
            <person name="Bassi C.A."/>
            <person name="Berry A.M."/>
            <person name="Bickhart D.M."/>
            <person name="Choisne N."/>
            <person name="Couloux A."/>
            <person name="Cournoyer B."/>
            <person name="Cruveiller S."/>
            <person name="Daubin V."/>
            <person name="Demange N."/>
            <person name="Francino M.P."/>
            <person name="Goltsman E."/>
            <person name="Huang Y."/>
            <person name="Kopp O.R."/>
            <person name="Labarre L."/>
            <person name="Lapidus A."/>
            <person name="Lavire C."/>
            <person name="Marechal J."/>
            <person name="Martinez M."/>
            <person name="Mastronunzio J.E."/>
            <person name="Mullin B.C."/>
            <person name="Niemann J."/>
            <person name="Pujic P."/>
            <person name="Rawnsley T."/>
            <person name="Rouy Z."/>
            <person name="Schenowitz C."/>
            <person name="Sellstedt A."/>
            <person name="Tavares F."/>
            <person name="Tomkins J.P."/>
            <person name="Vallenet D."/>
            <person name="Valverde C."/>
            <person name="Wall L.G."/>
            <person name="Wang Y."/>
            <person name="Medigue C."/>
            <person name="Benson D.R."/>
        </authorList>
    </citation>
    <scope>NUCLEOTIDE SEQUENCE [LARGE SCALE GENOMIC DNA]</scope>
    <source>
        <strain>DSM 45986 / CECT 9034 / ACN14a</strain>
    </source>
</reference>
<proteinExistence type="inferred from homology"/>
<gene>
    <name evidence="1" type="primary">ctaB</name>
    <name type="ordered locus">FRAAL4572</name>
</gene>